<keyword id="KW-0067">ATP-binding</keyword>
<keyword id="KW-0131">Cell cycle</keyword>
<keyword id="KW-0235">DNA replication</keyword>
<keyword id="KW-0238">DNA-binding</keyword>
<keyword id="KW-0547">Nucleotide-binding</keyword>
<keyword id="KW-0539">Nucleus</keyword>
<keyword id="KW-1185">Reference proteome</keyword>
<comment type="function">
    <text evidence="1">Component of ATP-dependent clamp loader (RFC and RFC-like) complexes for DNA clamps. During a clamp loading circle, the RFC:clamp complex binds to DNA and the recognition of the double-stranded/single-stranded junction stimulates ATP hydrolysis by RFC. The complex presumably provides bipartite ATP sites in which one subunit supplies a catalytic site for hydrolysis of ATP bound to the neighboring subunit. Dissociation of RFC from the clamp leaves the clamp encircling DNA. Component of the replication factor C (RFC or activator 1) complex which acts during elongation of primed DNA templates by DNA polymerase delta and epsilon. RFC has an essential but redundant activity in sister chromatid cohesion establishment (By similarity).</text>
</comment>
<comment type="subunit">
    <text evidence="1">Component of the replication factor C (RFC) complex.</text>
</comment>
<comment type="subcellular location">
    <subcellularLocation>
        <location evidence="3">Nucleus</location>
    </subcellularLocation>
</comment>
<comment type="developmental stage">
    <text evidence="2">Expressed in late sporogonial stages.</text>
</comment>
<comment type="miscellaneous">
    <text>Present with 2760 molecules/cell in log phase SD medium.</text>
</comment>
<comment type="similarity">
    <text evidence="3">Belongs to the activator 1 small subunits family.</text>
</comment>
<protein>
    <recommendedName>
        <fullName>Replication factor C subunit 4</fullName>
        <shortName>Replication factor C4</shortName>
    </recommendedName>
</protein>
<organism>
    <name type="scientific">Encephalitozoon cuniculi (strain GB-M1)</name>
    <name type="common">Microsporidian parasite</name>
    <dbReference type="NCBI Taxonomy" id="284813"/>
    <lineage>
        <taxon>Eukaryota</taxon>
        <taxon>Fungi</taxon>
        <taxon>Fungi incertae sedis</taxon>
        <taxon>Microsporidia</taxon>
        <taxon>Unikaryonidae</taxon>
        <taxon>Encephalitozoon</taxon>
    </lineage>
</organism>
<proteinExistence type="evidence at protein level"/>
<gene>
    <name type="primary">RFC4</name>
    <name type="ordered locus">ECU09_1330</name>
</gene>
<name>RFC4_ENCCU</name>
<feature type="chain" id="PRO_0000381755" description="Replication factor C subunit 4">
    <location>
        <begin position="1"/>
        <end position="309"/>
    </location>
</feature>
<feature type="binding site" evidence="1">
    <location>
        <position position="5"/>
    </location>
    <ligand>
        <name>ATP</name>
        <dbReference type="ChEBI" id="CHEBI:30616"/>
    </ligand>
</feature>
<feature type="binding site" evidence="1">
    <location>
        <position position="17"/>
    </location>
    <ligand>
        <name>ATP</name>
        <dbReference type="ChEBI" id="CHEBI:30616"/>
    </ligand>
</feature>
<feature type="binding site" evidence="1">
    <location>
        <begin position="42"/>
        <end position="50"/>
    </location>
    <ligand>
        <name>ATP</name>
        <dbReference type="ChEBI" id="CHEBI:30616"/>
    </ligand>
</feature>
<feature type="binding site" evidence="1">
    <location>
        <position position="134"/>
    </location>
    <ligand>
        <name>ATP</name>
        <dbReference type="ChEBI" id="CHEBI:30616"/>
    </ligand>
</feature>
<feature type="binding site" evidence="1">
    <location>
        <position position="192"/>
    </location>
    <ligand>
        <name>ATP</name>
        <dbReference type="ChEBI" id="CHEBI:30616"/>
    </ligand>
</feature>
<reference key="1">
    <citation type="journal article" date="2001" name="Nature">
        <title>Genome sequence and gene compaction of the eukaryote parasite Encephalitozoon cuniculi.</title>
        <authorList>
            <person name="Katinka M.D."/>
            <person name="Duprat S."/>
            <person name="Cornillot E."/>
            <person name="Metenier G."/>
            <person name="Thomarat F."/>
            <person name="Prensier G."/>
            <person name="Barbe V."/>
            <person name="Peyretaillade E."/>
            <person name="Brottier P."/>
            <person name="Wincker P."/>
            <person name="Delbac F."/>
            <person name="El Alaoui H."/>
            <person name="Peyret P."/>
            <person name="Saurin W."/>
            <person name="Gouy M."/>
            <person name="Weissenbach J."/>
            <person name="Vivares C.P."/>
        </authorList>
    </citation>
    <scope>NUCLEOTIDE SEQUENCE [LARGE SCALE GENOMIC DNA]</scope>
    <source>
        <strain>GB-M1</strain>
    </source>
</reference>
<reference key="2">
    <citation type="journal article" date="2006" name="Proteomics">
        <title>Proteomic analysis of the eukaryotic parasite Encephalitozoon cuniculi (microsporidia): a reference map for proteins expressed in late sporogonial stages.</title>
        <authorList>
            <person name="Brosson D."/>
            <person name="Kuhn L."/>
            <person name="Delbac F."/>
            <person name="Garin J."/>
            <person name="Vivares C.P."/>
            <person name="Texier C."/>
        </authorList>
    </citation>
    <scope>IDENTIFICATION BY MASS SPECTROMETRY [LARGE SCALE ANALYSIS]</scope>
    <scope>DEVELOPMENTAL STAGE</scope>
</reference>
<dbReference type="EMBL" id="AL590451">
    <property type="protein sequence ID" value="CAD27104.1"/>
    <property type="molecule type" value="Genomic_DNA"/>
</dbReference>
<dbReference type="RefSeq" id="XP_955685.1">
    <property type="nucleotide sequence ID" value="XM_950592.1"/>
</dbReference>
<dbReference type="SMR" id="Q8SQM0"/>
<dbReference type="FunCoup" id="Q8SQM0">
    <property type="interactions" value="178"/>
</dbReference>
<dbReference type="STRING" id="284813.Q8SQM0"/>
<dbReference type="VEuPathDB" id="MicrosporidiaDB:ECU09_1330"/>
<dbReference type="HOGENOM" id="CLU_042324_0_1_1"/>
<dbReference type="InParanoid" id="Q8SQM0"/>
<dbReference type="OMA" id="LCLANQM"/>
<dbReference type="OrthoDB" id="4199794at2759"/>
<dbReference type="Proteomes" id="UP000000819">
    <property type="component" value="Chromosome IX"/>
</dbReference>
<dbReference type="GO" id="GO:0005663">
    <property type="term" value="C:DNA replication factor C complex"/>
    <property type="evidence" value="ECO:0007669"/>
    <property type="project" value="TreeGrafter"/>
</dbReference>
<dbReference type="GO" id="GO:0031391">
    <property type="term" value="C:Elg1 RFC-like complex"/>
    <property type="evidence" value="ECO:0007669"/>
    <property type="project" value="UniProtKB-ARBA"/>
</dbReference>
<dbReference type="GO" id="GO:0005634">
    <property type="term" value="C:nucleus"/>
    <property type="evidence" value="ECO:0007669"/>
    <property type="project" value="UniProtKB-SubCell"/>
</dbReference>
<dbReference type="GO" id="GO:0005524">
    <property type="term" value="F:ATP binding"/>
    <property type="evidence" value="ECO:0007669"/>
    <property type="project" value="UniProtKB-KW"/>
</dbReference>
<dbReference type="GO" id="GO:0016887">
    <property type="term" value="F:ATP hydrolysis activity"/>
    <property type="evidence" value="ECO:0007669"/>
    <property type="project" value="InterPro"/>
</dbReference>
<dbReference type="GO" id="GO:0003677">
    <property type="term" value="F:DNA binding"/>
    <property type="evidence" value="ECO:0007669"/>
    <property type="project" value="UniProtKB-KW"/>
</dbReference>
<dbReference type="GO" id="GO:0003689">
    <property type="term" value="F:DNA clamp loader activity"/>
    <property type="evidence" value="ECO:0007669"/>
    <property type="project" value="TreeGrafter"/>
</dbReference>
<dbReference type="GO" id="GO:0006281">
    <property type="term" value="P:DNA repair"/>
    <property type="evidence" value="ECO:0007669"/>
    <property type="project" value="TreeGrafter"/>
</dbReference>
<dbReference type="GO" id="GO:0006271">
    <property type="term" value="P:DNA strand elongation involved in DNA replication"/>
    <property type="evidence" value="ECO:0007669"/>
    <property type="project" value="UniProtKB-ARBA"/>
</dbReference>
<dbReference type="CDD" id="cd00009">
    <property type="entry name" value="AAA"/>
    <property type="match status" value="1"/>
</dbReference>
<dbReference type="CDD" id="cd18140">
    <property type="entry name" value="HLD_clamp_RFC"/>
    <property type="match status" value="1"/>
</dbReference>
<dbReference type="FunFam" id="3.40.50.300:FF:000952">
    <property type="entry name" value="Replication factor C subunit 2"/>
    <property type="match status" value="1"/>
</dbReference>
<dbReference type="Gene3D" id="1.10.8.60">
    <property type="match status" value="1"/>
</dbReference>
<dbReference type="Gene3D" id="1.20.272.10">
    <property type="match status" value="1"/>
</dbReference>
<dbReference type="Gene3D" id="3.40.50.300">
    <property type="entry name" value="P-loop containing nucleotide triphosphate hydrolases"/>
    <property type="match status" value="1"/>
</dbReference>
<dbReference type="InterPro" id="IPR003593">
    <property type="entry name" value="AAA+_ATPase"/>
</dbReference>
<dbReference type="InterPro" id="IPR003959">
    <property type="entry name" value="ATPase_AAA_core"/>
</dbReference>
<dbReference type="InterPro" id="IPR008921">
    <property type="entry name" value="DNA_pol3_clamp-load_cplx_C"/>
</dbReference>
<dbReference type="InterPro" id="IPR050238">
    <property type="entry name" value="DNA_Rep/Repair_Clamp_Loader"/>
</dbReference>
<dbReference type="InterPro" id="IPR027417">
    <property type="entry name" value="P-loop_NTPase"/>
</dbReference>
<dbReference type="InterPro" id="IPR013748">
    <property type="entry name" value="Rep_factorC_C"/>
</dbReference>
<dbReference type="InterPro" id="IPR047854">
    <property type="entry name" value="RFC_lid"/>
</dbReference>
<dbReference type="NCBIfam" id="NF001679">
    <property type="entry name" value="PRK00440.1"/>
    <property type="match status" value="1"/>
</dbReference>
<dbReference type="PANTHER" id="PTHR11669">
    <property type="entry name" value="REPLICATION FACTOR C / DNA POLYMERASE III GAMMA-TAU SUBUNIT"/>
    <property type="match status" value="1"/>
</dbReference>
<dbReference type="PANTHER" id="PTHR11669:SF5">
    <property type="entry name" value="REPLICATION FACTOR C SUBUNIT 2"/>
    <property type="match status" value="1"/>
</dbReference>
<dbReference type="Pfam" id="PF00004">
    <property type="entry name" value="AAA"/>
    <property type="match status" value="1"/>
</dbReference>
<dbReference type="Pfam" id="PF08542">
    <property type="entry name" value="Rep_fac_C"/>
    <property type="match status" value="1"/>
</dbReference>
<dbReference type="SMART" id="SM00382">
    <property type="entry name" value="AAA"/>
    <property type="match status" value="1"/>
</dbReference>
<dbReference type="SUPFAM" id="SSF52540">
    <property type="entry name" value="P-loop containing nucleoside triphosphate hydrolases"/>
    <property type="match status" value="1"/>
</dbReference>
<dbReference type="SUPFAM" id="SSF48019">
    <property type="entry name" value="post-AAA+ oligomerization domain-like"/>
    <property type="match status" value="1"/>
</dbReference>
<accession>Q8SQM0</accession>
<sequence>MDLLVNKYQPSEIQDIVGNEATMELVSLMIESRDMPHLLFTGPPGTGKTTCAKILARRLLGNKEGLLELNASDERGIDTVRTTIKSFAQRRVKDCEFKIIILDEADSMTTTAQQAMRRVMEIHSSECRFILICNVFTKIFEPIQSRCAILRFDRIEQSVILKRLKEISEGEGIRITAEALDLVVELSDGDMRQSLNILQACINSPGTVDQDYIIKIIGLPSPKRIEKVLQRLLKREVEEALEMFDEIWEEKFDPLDLINSFFRAAKNMESYELLKVIGLANLRISEGVNSRLQFYGMFWDILDMGSKRL</sequence>
<evidence type="ECO:0000250" key="1"/>
<evidence type="ECO:0000269" key="2">
    <source>
    </source>
</evidence>
<evidence type="ECO:0000305" key="3"/>